<comment type="function">
    <text evidence="1">Catalyzes the pyruvoyl-dependent decarboxylation of aspartate to produce beta-alanine.</text>
</comment>
<comment type="catalytic activity">
    <reaction evidence="1">
        <text>L-aspartate + H(+) = beta-alanine + CO2</text>
        <dbReference type="Rhea" id="RHEA:19497"/>
        <dbReference type="ChEBI" id="CHEBI:15378"/>
        <dbReference type="ChEBI" id="CHEBI:16526"/>
        <dbReference type="ChEBI" id="CHEBI:29991"/>
        <dbReference type="ChEBI" id="CHEBI:57966"/>
        <dbReference type="EC" id="4.1.1.11"/>
    </reaction>
</comment>
<comment type="cofactor">
    <cofactor evidence="1">
        <name>pyruvate</name>
        <dbReference type="ChEBI" id="CHEBI:15361"/>
    </cofactor>
    <text evidence="1">Binds 1 pyruvoyl group covalently per subunit.</text>
</comment>
<comment type="pathway">
    <text evidence="1">Cofactor biosynthesis; (R)-pantothenate biosynthesis; beta-alanine from L-aspartate: step 1/1.</text>
</comment>
<comment type="subunit">
    <text evidence="1">Heterooctamer of four alpha and four beta subunits.</text>
</comment>
<comment type="subcellular location">
    <subcellularLocation>
        <location evidence="1">Cytoplasm</location>
    </subcellularLocation>
</comment>
<comment type="PTM">
    <text evidence="1">Is synthesized initially as an inactive proenzyme, which is activated by self-cleavage at a specific serine bond to produce a beta-subunit with a hydroxyl group at its C-terminus and an alpha-subunit with a pyruvoyl group at its N-terminus.</text>
</comment>
<comment type="similarity">
    <text evidence="1">Belongs to the PanD family.</text>
</comment>
<feature type="chain" id="PRO_1000192055" description="Aspartate 1-decarboxylase beta chain" evidence="1">
    <location>
        <begin position="1"/>
        <end position="23"/>
    </location>
</feature>
<feature type="chain" id="PRO_1000192056" description="Aspartate 1-decarboxylase alpha chain" evidence="1">
    <location>
        <begin position="24"/>
        <end position="115"/>
    </location>
</feature>
<feature type="active site" description="Schiff-base intermediate with substrate; via pyruvic acid" evidence="1">
    <location>
        <position position="24"/>
    </location>
</feature>
<feature type="active site" description="Proton donor" evidence="1">
    <location>
        <position position="57"/>
    </location>
</feature>
<feature type="binding site" evidence="1">
    <location>
        <position position="56"/>
    </location>
    <ligand>
        <name>substrate</name>
    </ligand>
</feature>
<feature type="binding site" evidence="1">
    <location>
        <begin position="72"/>
        <end position="74"/>
    </location>
    <ligand>
        <name>substrate</name>
    </ligand>
</feature>
<feature type="modified residue" description="Pyruvic acid (Ser)" evidence="1">
    <location>
        <position position="24"/>
    </location>
</feature>
<proteinExistence type="inferred from homology"/>
<evidence type="ECO:0000255" key="1">
    <source>
        <dbReference type="HAMAP-Rule" id="MF_00446"/>
    </source>
</evidence>
<protein>
    <recommendedName>
        <fullName evidence="1">Aspartate 1-decarboxylase</fullName>
        <ecNumber evidence="1">4.1.1.11</ecNumber>
    </recommendedName>
    <alternativeName>
        <fullName evidence="1">Aspartate alpha-decarboxylase</fullName>
    </alternativeName>
    <component>
        <recommendedName>
            <fullName evidence="1">Aspartate 1-decarboxylase beta chain</fullName>
        </recommendedName>
    </component>
    <component>
        <recommendedName>
            <fullName evidence="1">Aspartate 1-decarboxylase alpha chain</fullName>
        </recommendedName>
    </component>
</protein>
<sequence>MRFMLKSKLHMACVTDKNINYEGSIEIDEELMNIVDLKENELVLIADLNNGQRFETYVIKGKPGSGTISLNGAAARLVEKGDRIIVMSFGIFNDGEYSGPKVAILNEKNQVIHLK</sequence>
<name>PAND_PSELT</name>
<dbReference type="EC" id="4.1.1.11" evidence="1"/>
<dbReference type="EMBL" id="CP000812">
    <property type="protein sequence ID" value="ABV33438.1"/>
    <property type="molecule type" value="Genomic_DNA"/>
</dbReference>
<dbReference type="SMR" id="A8F5K4"/>
<dbReference type="STRING" id="416591.Tlet_0872"/>
<dbReference type="KEGG" id="tle:Tlet_0872"/>
<dbReference type="eggNOG" id="COG0853">
    <property type="taxonomic scope" value="Bacteria"/>
</dbReference>
<dbReference type="HOGENOM" id="CLU_115305_2_0_0"/>
<dbReference type="UniPathway" id="UPA00028">
    <property type="reaction ID" value="UER00002"/>
</dbReference>
<dbReference type="Proteomes" id="UP000002016">
    <property type="component" value="Chromosome"/>
</dbReference>
<dbReference type="GO" id="GO:0005829">
    <property type="term" value="C:cytosol"/>
    <property type="evidence" value="ECO:0007669"/>
    <property type="project" value="TreeGrafter"/>
</dbReference>
<dbReference type="GO" id="GO:0004068">
    <property type="term" value="F:aspartate 1-decarboxylase activity"/>
    <property type="evidence" value="ECO:0007669"/>
    <property type="project" value="UniProtKB-UniRule"/>
</dbReference>
<dbReference type="GO" id="GO:0006523">
    <property type="term" value="P:alanine biosynthetic process"/>
    <property type="evidence" value="ECO:0007669"/>
    <property type="project" value="InterPro"/>
</dbReference>
<dbReference type="GO" id="GO:0015940">
    <property type="term" value="P:pantothenate biosynthetic process"/>
    <property type="evidence" value="ECO:0007669"/>
    <property type="project" value="UniProtKB-UniRule"/>
</dbReference>
<dbReference type="CDD" id="cd06919">
    <property type="entry name" value="Asp_decarbox"/>
    <property type="match status" value="1"/>
</dbReference>
<dbReference type="Gene3D" id="2.40.40.20">
    <property type="match status" value="1"/>
</dbReference>
<dbReference type="HAMAP" id="MF_00446">
    <property type="entry name" value="PanD"/>
    <property type="match status" value="1"/>
</dbReference>
<dbReference type="InterPro" id="IPR009010">
    <property type="entry name" value="Asp_de-COase-like_dom_sf"/>
</dbReference>
<dbReference type="InterPro" id="IPR003190">
    <property type="entry name" value="Asp_decarbox"/>
</dbReference>
<dbReference type="NCBIfam" id="TIGR00223">
    <property type="entry name" value="panD"/>
    <property type="match status" value="1"/>
</dbReference>
<dbReference type="PANTHER" id="PTHR21012">
    <property type="entry name" value="ASPARTATE 1-DECARBOXYLASE"/>
    <property type="match status" value="1"/>
</dbReference>
<dbReference type="PANTHER" id="PTHR21012:SF0">
    <property type="entry name" value="ASPARTATE 1-DECARBOXYLASE"/>
    <property type="match status" value="1"/>
</dbReference>
<dbReference type="Pfam" id="PF02261">
    <property type="entry name" value="Asp_decarbox"/>
    <property type="match status" value="1"/>
</dbReference>
<dbReference type="PIRSF" id="PIRSF006246">
    <property type="entry name" value="Asp_decarbox"/>
    <property type="match status" value="1"/>
</dbReference>
<dbReference type="SUPFAM" id="SSF50692">
    <property type="entry name" value="ADC-like"/>
    <property type="match status" value="1"/>
</dbReference>
<gene>
    <name evidence="1" type="primary">panD</name>
    <name type="ordered locus">Tlet_0872</name>
</gene>
<keyword id="KW-0068">Autocatalytic cleavage</keyword>
<keyword id="KW-0963">Cytoplasm</keyword>
<keyword id="KW-0210">Decarboxylase</keyword>
<keyword id="KW-0456">Lyase</keyword>
<keyword id="KW-0566">Pantothenate biosynthesis</keyword>
<keyword id="KW-0670">Pyruvate</keyword>
<keyword id="KW-1185">Reference proteome</keyword>
<keyword id="KW-0704">Schiff base</keyword>
<keyword id="KW-0865">Zymogen</keyword>
<accession>A8F5K4</accession>
<organism>
    <name type="scientific">Pseudothermotoga lettingae (strain ATCC BAA-301 / DSM 14385 / NBRC 107922 / TMO)</name>
    <name type="common">Thermotoga lettingae</name>
    <dbReference type="NCBI Taxonomy" id="416591"/>
    <lineage>
        <taxon>Bacteria</taxon>
        <taxon>Thermotogati</taxon>
        <taxon>Thermotogota</taxon>
        <taxon>Thermotogae</taxon>
        <taxon>Thermotogales</taxon>
        <taxon>Thermotogaceae</taxon>
        <taxon>Pseudothermotoga</taxon>
    </lineage>
</organism>
<reference key="1">
    <citation type="submission" date="2007-08" db="EMBL/GenBank/DDBJ databases">
        <title>Complete sequence of Thermotoga lettingae TMO.</title>
        <authorList>
            <consortium name="US DOE Joint Genome Institute"/>
            <person name="Copeland A."/>
            <person name="Lucas S."/>
            <person name="Lapidus A."/>
            <person name="Barry K."/>
            <person name="Glavina del Rio T."/>
            <person name="Dalin E."/>
            <person name="Tice H."/>
            <person name="Pitluck S."/>
            <person name="Foster B."/>
            <person name="Bruce D."/>
            <person name="Schmutz J."/>
            <person name="Larimer F."/>
            <person name="Land M."/>
            <person name="Hauser L."/>
            <person name="Kyrpides N."/>
            <person name="Mikhailova N."/>
            <person name="Nelson K."/>
            <person name="Gogarten J.P."/>
            <person name="Noll K."/>
            <person name="Richardson P."/>
        </authorList>
    </citation>
    <scope>NUCLEOTIDE SEQUENCE [LARGE SCALE GENOMIC DNA]</scope>
    <source>
        <strain>ATCC BAA-301 / DSM 14385 / NBRC 107922 / TMO</strain>
    </source>
</reference>